<sequence length="1358" mass="146683">MGKEAGAAESSTVVLAVNGKRYEAAGVAPSTSLLEFLRTQTPVRGPKLGCGEGGCGACVVLVSKYDPATDEVTEFSASSCLTLLHSVDRCSVTTSEGIGNTRDGYHPVQQRLSGFHASQCGFCTPGMCMSIFSALVKADNKSDRPDPPAGFSKITTSEAEKAVSGNLCRCTGYRPIVDTCKSFASDVDLEDLGLNCFWKKGEEPAEVSRLPGYNSGAVCTFPEFLKSEIKSTMKQVNDVPIAASGDGWYHPKSIEELHRLFDSSWFDDSSVKIVASNTGSGVYKDQDLYDKYIDIKGIPELSVINKNDKAIELGSVVSISKAIEVLSDGNLVFRKIADHLNKVASPFVRNTATIGGNIMMAQRLPFESDVATVLLAAGSTVTVQVASKRLCFTLEEFLEQPPCDSRTLLLSIFIPEWGSDYVTFETFRAAPRPFGNAVSYVNSAFLARTSGSLLIEDICLAFGAYGVDHAIRAKKVEDFLKGKSLSSFVILEAIKLLKDTVSPSEGTTHHEYRVSLAVSFLFSFLSSLANSSSAPSNIDTPNGSYTHETGSNVDSPERHIKVDSNDLPIRSRQEMVFSDEYKPVGKPIKKVGAEIQASGEAVYVDDIPAPKDCLYGAFIYSTHPHAHVRSINFKSSLASQKVITVITAKDIPSGGENIGSSFLMQGEALFADPIAEFAGQNIGVVIAETQRYANMAAKQAVVEYSTENLQPPILTIEDAIQRNSYIQIPPFLAPKPVGDYNKGMAEADHKILSAEVKLESQYYFYMETQAALAIPDEDNCITIYSSTQMPELTQNLIARCLGIPFHNVRVISRRVGGGFGGKAMKATHTACACALAAFKLRRPVRMYLDRKTDMIMAGGRHPMKAKYSVGFKSDGKITALHLDLGINAGISPDVSPLMPRAIIGALKKYNWGTLEFDTKVCKTNVSSKSAMRAPGDVQGSFIAEAIIEHVASALALDTNTVRRKNLHDFESLEVFYGESAGEASTYSLVSMFDKLALSPEYQHRAAMIEQFNSSNKWKKRGISCVPATYEVNLRPTPGKVSIMNDGSIAVEVGGIEIGQGLWTKVKQMTAFGLGQLCPDGGECLLDKVRVIQADTLSLIQGGMTAGSTTSETSCETVRQSCVALVEKLNPIKESLEAKSNTVEWSALIAQASMASVNLSAQPYWTPDPSFKSYLNYGAGTSEVEVDILTGATTILRSDLVYDCGQSLNPAVDLGQIEGCFVQGIGFFTNEDYKTNSDGLVIHDGTWTYKIPTVDNIPKEFNVEMFNSAPDKKRVLSSKASGEPPLVLATSVHCAMREAIRAARKEFSVSTSPAKSAVTFQMDVPATMPVVKELCGLDVVERYLENVSAASAGPNTAKA</sequence>
<feature type="chain" id="PRO_0000418842" description="Indole-3-acetaldehyde oxidase">
    <location>
        <begin position="1"/>
        <end position="1358"/>
    </location>
</feature>
<feature type="domain" description="2Fe-2S ferredoxin-type" evidence="2">
    <location>
        <begin position="11"/>
        <end position="98"/>
    </location>
</feature>
<feature type="domain" description="FAD-binding PCMH-type" evidence="3">
    <location>
        <begin position="241"/>
        <end position="419"/>
    </location>
</feature>
<feature type="region of interest" description="Disordered" evidence="4">
    <location>
        <begin position="532"/>
        <end position="559"/>
    </location>
</feature>
<feature type="compositionally biased region" description="Polar residues" evidence="4">
    <location>
        <begin position="537"/>
        <end position="554"/>
    </location>
</feature>
<feature type="binding site" evidence="2">
    <location>
        <position position="50"/>
    </location>
    <ligand>
        <name>[2Fe-2S] cluster</name>
        <dbReference type="ChEBI" id="CHEBI:190135"/>
    </ligand>
</feature>
<feature type="binding site" evidence="2">
    <location>
        <position position="55"/>
    </location>
    <ligand>
        <name>[2Fe-2S] cluster</name>
        <dbReference type="ChEBI" id="CHEBI:190135"/>
    </ligand>
</feature>
<feature type="binding site" evidence="2">
    <location>
        <position position="58"/>
    </location>
    <ligand>
        <name>[2Fe-2S] cluster</name>
        <dbReference type="ChEBI" id="CHEBI:190135"/>
    </ligand>
</feature>
<feature type="sequence conflict" description="In Ref. 2; ACN28172." evidence="7" ref="2">
    <original>T</original>
    <variation>A</variation>
    <location>
        <position position="1116"/>
    </location>
</feature>
<feature type="sequence conflict" description="In Ref. 2; ACN28172." evidence="7" ref="2">
    <original>KLN</original>
    <variation>RLK</variation>
    <location>
        <begin position="1127"/>
        <end position="1129"/>
    </location>
</feature>
<feature type="sequence conflict" description="In Ref. 2; ACN28172." evidence="7" ref="2">
    <original>P</original>
    <variation>A</variation>
    <location>
        <position position="1162"/>
    </location>
</feature>
<feature type="sequence conflict" description="In Ref. 2; ACN28172." evidence="7" ref="2">
    <original>T</original>
    <variation>A</variation>
    <location>
        <position position="1289"/>
    </location>
</feature>
<evidence type="ECO:0000250" key="1"/>
<evidence type="ECO:0000255" key="2">
    <source>
        <dbReference type="PROSITE-ProRule" id="PRU00465"/>
    </source>
</evidence>
<evidence type="ECO:0000255" key="3">
    <source>
        <dbReference type="PROSITE-ProRule" id="PRU00718"/>
    </source>
</evidence>
<evidence type="ECO:0000256" key="4">
    <source>
        <dbReference type="SAM" id="MobiDB-lite"/>
    </source>
</evidence>
<evidence type="ECO:0000269" key="5">
    <source>
    </source>
</evidence>
<evidence type="ECO:0000269" key="6">
    <source>
    </source>
</evidence>
<evidence type="ECO:0000305" key="7"/>
<evidence type="ECO:0000305" key="8">
    <source>
    </source>
</evidence>
<reference key="1">
    <citation type="journal article" date="1997" name="J. Biol. Chem.">
        <title>Cloning and molecular characterization of plant aldehyde oxidase.</title>
        <authorList>
            <person name="Sekimoto H."/>
            <person name="Seo M."/>
            <person name="Dohmae N."/>
            <person name="Takio K."/>
            <person name="Kamiya Y."/>
            <person name="Koshiba T."/>
        </authorList>
    </citation>
    <scope>NUCLEOTIDE SEQUENCE [MRNA]</scope>
    <scope>PROTEIN SEQUENCE OF 235-272; 591-611 AND 1234-1249</scope>
    <scope>TISSUE SPECIFICITY</scope>
    <source>
        <strain>cv. Golden Cross Bantam 70</strain>
        <tissue>Coleoptile</tissue>
    </source>
</reference>
<reference key="2">
    <citation type="journal article" date="2009" name="PLoS Genet.">
        <title>Sequencing, mapping, and analysis of 27,455 maize full-length cDNAs.</title>
        <authorList>
            <person name="Soderlund C."/>
            <person name="Descour A."/>
            <person name="Kudrna D."/>
            <person name="Bomhoff M."/>
            <person name="Boyd L."/>
            <person name="Currie J."/>
            <person name="Angelova A."/>
            <person name="Collura K."/>
            <person name="Wissotski M."/>
            <person name="Ashley E."/>
            <person name="Morrow D."/>
            <person name="Fernandes J."/>
            <person name="Walbot V."/>
            <person name="Yu Y."/>
        </authorList>
    </citation>
    <scope>NUCLEOTIDE SEQUENCE [LARGE SCALE MRNA] OF 533-1358</scope>
    <source>
        <strain>cv. B73</strain>
    </source>
</reference>
<reference key="3">
    <citation type="journal article" date="1996" name="Plant Physiol.">
        <title>Purification and properties of flavin- and molybdenum-containing aldehyde oxidase from coleoptiles of maize.</title>
        <authorList>
            <person name="Koshiba T."/>
            <person name="Saito E."/>
            <person name="Ono N."/>
            <person name="Yamamoto N."/>
            <person name="Sato M."/>
        </authorList>
    </citation>
    <scope>FUNCTION</scope>
    <scope>CATALYTIC ACTIVITY</scope>
    <scope>COFACTOR</scope>
    <scope>ACTIVITY REGULATION</scope>
    <scope>BIOPHYSICOCHEMICAL PROPERTIES</scope>
    <source>
        <strain>cv. Golden Cross Bantam 70</strain>
    </source>
</reference>
<comment type="function">
    <text evidence="5">In higher plants aldehyde oxidases (AO) appear to be homo- and heterodimeric assemblies of AO subunits with probably different physiological functions. Involved in the biosynthesis of auxin from (indol-3-yl)acetaldehyde. Can also use indole-3-aldehyde and benzaldehyde as substrate.</text>
</comment>
<comment type="catalytic activity">
    <reaction evidence="5">
        <text>indole-3-acetaldehyde + O2 + H2O = (indol-3-yl)acetate + H2O2 + H(+)</text>
        <dbReference type="Rhea" id="RHEA:16277"/>
        <dbReference type="ChEBI" id="CHEBI:15377"/>
        <dbReference type="ChEBI" id="CHEBI:15378"/>
        <dbReference type="ChEBI" id="CHEBI:15379"/>
        <dbReference type="ChEBI" id="CHEBI:16240"/>
        <dbReference type="ChEBI" id="CHEBI:18086"/>
        <dbReference type="ChEBI" id="CHEBI:30854"/>
        <dbReference type="EC" id="1.2.3.7"/>
    </reaction>
</comment>
<comment type="cofactor">
    <cofactor evidence="1">
        <name>[2Fe-2S] cluster</name>
        <dbReference type="ChEBI" id="CHEBI:190135"/>
    </cofactor>
    <text evidence="1">Binds 2 [2Fe-2S] clusters.</text>
</comment>
<comment type="cofactor">
    <cofactor evidence="5">
        <name>FAD</name>
        <dbReference type="ChEBI" id="CHEBI:57692"/>
    </cofactor>
</comment>
<comment type="cofactor">
    <cofactor evidence="8">
        <name>Mo-molybdopterin</name>
        <dbReference type="ChEBI" id="CHEBI:71302"/>
    </cofactor>
    <text evidence="8">Binds 1 Mo-molybdopterin (Mo-MPT) cofactor per subunit.</text>
</comment>
<comment type="activity regulation">
    <text evidence="5">Inhibited by 2-mercaptoethanol, p-chloromercuribenzoate, and iodoacetate.</text>
</comment>
<comment type="biophysicochemical properties">
    <kinetics>
        <KM evidence="5">3.2 uM for (indol-3-yl)acetaldehyde (at pH 7.4 and 30 degrees Celsius, with O2 as electron acceptor)</KM>
        <KM evidence="5">4.5 uM for indol-3-aldehyde (at pH 7.4 and 30 degrees Celsius, with O2 as electron acceptor)</KM>
        <KM evidence="5">1.5 uM for benzaldehyde (at pH 7.4 and 30 degrees Celsius, with O2 as electron acceptor)</KM>
        <KM evidence="5">2.9 uM for protocatechualdehyde (at pH 7.4 and 30 degrees Celsius, with O2 as electron acceptor)</KM>
        <KM evidence="5">5 uM for (indol-3-yl)acetaldehyde (at pH 7.4 and 30 degrees Celsius, with DCIP as electron acceptor)</KM>
        <KM evidence="5">14 uM for indol-3-aldehyde (at pH 7.4 and 30 degrees Celsius, with DCIP as electron acceptor)</KM>
        <KM evidence="5">5 uM for benzaldehyde (at pH 7.4 and 30 degrees Celsius, with DCIP as electron acceptor)</KM>
        <KM evidence="5">26 uM for protocatechualdehyde (at pH 7.4 and 30 degrees Celsius, with DCIP as electron acceptor)</KM>
        <KM evidence="5">250 uM for phenylacetaldehyde (at pH 7.4 and 30 degrees Celsius, with DCIP as electron acceptor)</KM>
        <KM evidence="5">26 uM for butyraldehyde (at pH 7.4 and 30 degrees Celsius, with DCIP as electron acceptor)</KM>
        <KM evidence="5">74 uM for propionaldehyde (at pH 7.4 and 30 degrees Celsius, with DCIP as electron acceptor)</KM>
        <KM evidence="5">345 uM for acetaldehyde (at pH 7.4 and 30 degrees Celsius, with DCIP as electron acceptor)</KM>
        <Vmax evidence="5">76.0 nmol/min/mg enzyme with (indol-3-yl)acetaldehyde as substrate (at pH 7.4 and 30 degrees Celsius, with O2 as electron acceptor)</Vmax>
        <Vmax evidence="5">69.0 nmol/min/mg enzyme with indol-3-aldehyde as substrate (at pH 7.4 and 30 degrees Celsius, with O2 as electron acceptor)</Vmax>
        <Vmax evidence="5">453.0 nmol/min/mg enzyme with benzaldehyde as substrate (at pH 7.4 and 30 degrees Celsius, with O2 as electron acceptor)</Vmax>
        <Vmax evidence="5">175.0 nmol/min/mg enzyme with protocatechualdehyde as substrate (at pH 7.4 and 30 degrees Celsius, with O2 as electron acceptor)</Vmax>
        <Vmax evidence="5">28.0 nmol/min/mg enzyme with (indol-3-yl)acetaldehyde as substrate (at pH 7.4 and 30 degrees Celsius, with DCIP as electron acceptor)</Vmax>
        <Vmax evidence="5">190.0 nmol/min/mg enzyme with indol-3-aldehyde as substrate (at pH 7.4 and 30 degrees Celsius, with DCIP as electron acceptor)</Vmax>
        <Vmax evidence="5">247.0 nmol/min/mg enzyme with benzaldehyde as substrate (at pH 7.4 and 30 degrees Celsius, with DCIP as electron acceptor)</Vmax>
        <Vmax evidence="5">316.0 nmol/min/mg enzyme with protocatechualdehyde as substrate (at pH 7.4 and 30 degrees Celsius, with DCIP as electron acceptor)</Vmax>
        <Vmax evidence="5">120.0 nmol/min/mg enzyme with phenylacetaldehyde as substrate (at pH 7.4 and 30 degrees Celsius, with DCIP as electron acceptor)</Vmax>
        <Vmax evidence="5">113.0 nmol/min/mg enzyme with butyraldehyde as substrate (at pH 7.4 and 30 degrees Celsius, with DCIP as electron acceptor)</Vmax>
        <Vmax evidence="5">70.0 nmol/min/mg enzyme with propionaldehyde as substrate (at pH 7.4 and 30 degrees Celsius, with DCIP as electron acceptor)</Vmax>
        <Vmax evidence="5">57.0 nmol/min/mg enzyme with acetaldehyde as substrate (at pH 7.4 and 30 degrees Celsius, with DCIP as electron acceptor)</Vmax>
    </kinetics>
    <phDependence>
        <text evidence="5">Optimum pH is 7-8.</text>
    </phDependence>
</comment>
<comment type="subunit">
    <text evidence="1">Aldehyde oxidases (AO) are homodimers and heterodimers of AO subunits.</text>
</comment>
<comment type="subcellular location">
    <subcellularLocation>
        <location evidence="7">Cytoplasm</location>
    </subcellularLocation>
</comment>
<comment type="tissue specificity">
    <text evidence="6">Mostly expressed in roots, and, to a lower extent, in mesocotyl, leaves and coleoptile. Accumulates in apical region of maize coleoptiles (at protein level).</text>
</comment>
<comment type="similarity">
    <text evidence="7">Belongs to the xanthine dehydrogenase family.</text>
</comment>
<comment type="sequence caution" evidence="7">
    <conflict type="erroneous initiation">
        <sequence resource="EMBL-CDS" id="ACN28172"/>
    </conflict>
    <text>Truncated N-terminus.</text>
</comment>
<accession>O23887</accession>
<accession>C0P5A6</accession>
<name>ALDO1_MAIZE</name>
<keyword id="KW-0001">2Fe-2S</keyword>
<keyword id="KW-0937">Abscisic acid biosynthesis</keyword>
<keyword id="KW-0073">Auxin biosynthesis</keyword>
<keyword id="KW-0963">Cytoplasm</keyword>
<keyword id="KW-0903">Direct protein sequencing</keyword>
<keyword id="KW-0274">FAD</keyword>
<keyword id="KW-0285">Flavoprotein</keyword>
<keyword id="KW-0408">Iron</keyword>
<keyword id="KW-0411">Iron-sulfur</keyword>
<keyword id="KW-0479">Metal-binding</keyword>
<keyword id="KW-0500">Molybdenum</keyword>
<keyword id="KW-0520">NAD</keyword>
<keyword id="KW-0560">Oxidoreductase</keyword>
<keyword id="KW-1185">Reference proteome</keyword>
<gene>
    <name type="primary">AO1</name>
</gene>
<proteinExistence type="evidence at protein level"/>
<protein>
    <recommendedName>
        <fullName>Indole-3-acetaldehyde oxidase</fullName>
        <shortName>IAA oxidase</shortName>
        <ecNumber>1.2.3.7</ecNumber>
    </recommendedName>
    <alternativeName>
        <fullName>Aldehyde oxidase</fullName>
        <shortName>ZmAO-1</shortName>
    </alternativeName>
</protein>
<dbReference type="EC" id="1.2.3.7"/>
<dbReference type="EMBL" id="D88451">
    <property type="protein sequence ID" value="BAA23226.1"/>
    <property type="molecule type" value="mRNA"/>
</dbReference>
<dbReference type="EMBL" id="BT063475">
    <property type="protein sequence ID" value="ACN28172.1"/>
    <property type="status" value="ALT_INIT"/>
    <property type="molecule type" value="mRNA"/>
</dbReference>
<dbReference type="PIR" id="T01698">
    <property type="entry name" value="T01698"/>
</dbReference>
<dbReference type="RefSeq" id="NP_001105308.1">
    <property type="nucleotide sequence ID" value="NM_001111838.1"/>
</dbReference>
<dbReference type="SMR" id="O23887"/>
<dbReference type="FunCoup" id="O23887">
    <property type="interactions" value="10"/>
</dbReference>
<dbReference type="STRING" id="4577.O23887"/>
<dbReference type="PaxDb" id="4577-GRMZM2G141535_P01"/>
<dbReference type="GeneID" id="542228"/>
<dbReference type="KEGG" id="zma:542228"/>
<dbReference type="MaizeGDB" id="275805"/>
<dbReference type="eggNOG" id="KOG0430">
    <property type="taxonomic scope" value="Eukaryota"/>
</dbReference>
<dbReference type="InParanoid" id="O23887"/>
<dbReference type="OrthoDB" id="8300278at2759"/>
<dbReference type="BRENDA" id="1.2.3.1">
    <property type="organism ID" value="6752"/>
</dbReference>
<dbReference type="Proteomes" id="UP000007305">
    <property type="component" value="Unplaced"/>
</dbReference>
<dbReference type="ExpressionAtlas" id="O23887">
    <property type="expression patterns" value="baseline and differential"/>
</dbReference>
<dbReference type="GO" id="GO:0005737">
    <property type="term" value="C:cytoplasm"/>
    <property type="evidence" value="ECO:0007669"/>
    <property type="project" value="UniProtKB-SubCell"/>
</dbReference>
<dbReference type="GO" id="GO:0051537">
    <property type="term" value="F:2 iron, 2 sulfur cluster binding"/>
    <property type="evidence" value="ECO:0007669"/>
    <property type="project" value="UniProtKB-KW"/>
</dbReference>
<dbReference type="GO" id="GO:0071949">
    <property type="term" value="F:FAD binding"/>
    <property type="evidence" value="ECO:0000314"/>
    <property type="project" value="UniProtKB"/>
</dbReference>
<dbReference type="GO" id="GO:0050302">
    <property type="term" value="F:indole-3-acetaldehyde oxidase activity"/>
    <property type="evidence" value="ECO:0000314"/>
    <property type="project" value="UniProtKB"/>
</dbReference>
<dbReference type="GO" id="GO:0005506">
    <property type="term" value="F:iron ion binding"/>
    <property type="evidence" value="ECO:0007669"/>
    <property type="project" value="InterPro"/>
</dbReference>
<dbReference type="GO" id="GO:0043546">
    <property type="term" value="F:molybdopterin cofactor binding"/>
    <property type="evidence" value="ECO:0000314"/>
    <property type="project" value="UniProtKB"/>
</dbReference>
<dbReference type="GO" id="GO:0016491">
    <property type="term" value="F:oxidoreductase activity"/>
    <property type="evidence" value="ECO:0000318"/>
    <property type="project" value="GO_Central"/>
</dbReference>
<dbReference type="GO" id="GO:0009688">
    <property type="term" value="P:abscisic acid biosynthetic process"/>
    <property type="evidence" value="ECO:0007669"/>
    <property type="project" value="UniProtKB-KW"/>
</dbReference>
<dbReference type="GO" id="GO:0009851">
    <property type="term" value="P:auxin biosynthetic process"/>
    <property type="evidence" value="ECO:0000314"/>
    <property type="project" value="UniProtKB"/>
</dbReference>
<dbReference type="FunFam" id="1.10.150.120:FF:000006">
    <property type="entry name" value="Aldehyde oxidase"/>
    <property type="match status" value="1"/>
</dbReference>
<dbReference type="FunFam" id="3.30.465.10:FF:000013">
    <property type="entry name" value="Aldehyde oxidase"/>
    <property type="match status" value="1"/>
</dbReference>
<dbReference type="FunFam" id="3.30.365.10:FF:000008">
    <property type="entry name" value="Aldehyde oxidase1"/>
    <property type="match status" value="1"/>
</dbReference>
<dbReference type="FunFam" id="3.30.390.50:FF:000003">
    <property type="entry name" value="Aldehyde oxidase1"/>
    <property type="match status" value="1"/>
</dbReference>
<dbReference type="FunFam" id="3.90.1170.50:FF:000007">
    <property type="entry name" value="Aldehyde oxidase1"/>
    <property type="match status" value="1"/>
</dbReference>
<dbReference type="FunFam" id="3.30.365.10:FF:000001">
    <property type="entry name" value="Xanthine dehydrogenase oxidase"/>
    <property type="match status" value="1"/>
</dbReference>
<dbReference type="FunFam" id="3.10.20.30:FF:000012">
    <property type="entry name" value="Xanthine dehydrogenase/oxidase"/>
    <property type="match status" value="1"/>
</dbReference>
<dbReference type="Gene3D" id="3.10.20.30">
    <property type="match status" value="1"/>
</dbReference>
<dbReference type="Gene3D" id="3.30.465.10">
    <property type="match status" value="1"/>
</dbReference>
<dbReference type="Gene3D" id="1.10.150.120">
    <property type="entry name" value="[2Fe-2S]-binding domain"/>
    <property type="match status" value="1"/>
</dbReference>
<dbReference type="Gene3D" id="3.90.1170.50">
    <property type="entry name" value="Aldehyde oxidase/xanthine dehydrogenase, a/b hammerhead"/>
    <property type="match status" value="1"/>
</dbReference>
<dbReference type="Gene3D" id="3.30.365.10">
    <property type="entry name" value="Aldehyde oxidase/xanthine dehydrogenase, molybdopterin binding domain"/>
    <property type="match status" value="4"/>
</dbReference>
<dbReference type="Gene3D" id="3.30.390.50">
    <property type="entry name" value="CO dehydrogenase flavoprotein, C-terminal domain"/>
    <property type="match status" value="1"/>
</dbReference>
<dbReference type="InterPro" id="IPR002888">
    <property type="entry name" value="2Fe-2S-bd"/>
</dbReference>
<dbReference type="InterPro" id="IPR036884">
    <property type="entry name" value="2Fe-2S-bd_dom_sf"/>
</dbReference>
<dbReference type="InterPro" id="IPR036010">
    <property type="entry name" value="2Fe-2S_ferredoxin-like_sf"/>
</dbReference>
<dbReference type="InterPro" id="IPR001041">
    <property type="entry name" value="2Fe-2S_ferredoxin-type"/>
</dbReference>
<dbReference type="InterPro" id="IPR006058">
    <property type="entry name" value="2Fe2S_fd_BS"/>
</dbReference>
<dbReference type="InterPro" id="IPR000674">
    <property type="entry name" value="Ald_Oxase/Xan_DH_a/b"/>
</dbReference>
<dbReference type="InterPro" id="IPR036856">
    <property type="entry name" value="Ald_Oxase/Xan_DH_a/b_sf"/>
</dbReference>
<dbReference type="InterPro" id="IPR016208">
    <property type="entry name" value="Ald_Oxase/xanthine_DH-like"/>
</dbReference>
<dbReference type="InterPro" id="IPR008274">
    <property type="entry name" value="AldOxase/xan_DH_MoCoBD1"/>
</dbReference>
<dbReference type="InterPro" id="IPR046867">
    <property type="entry name" value="AldOxase/xan_DH_MoCoBD2"/>
</dbReference>
<dbReference type="InterPro" id="IPR037165">
    <property type="entry name" value="AldOxase/xan_DH_Mopterin-bd_sf"/>
</dbReference>
<dbReference type="InterPro" id="IPR012675">
    <property type="entry name" value="Beta-grasp_dom_sf"/>
</dbReference>
<dbReference type="InterPro" id="IPR005107">
    <property type="entry name" value="CO_DH_flav_C"/>
</dbReference>
<dbReference type="InterPro" id="IPR036683">
    <property type="entry name" value="CO_DH_flav_C_dom_sf"/>
</dbReference>
<dbReference type="InterPro" id="IPR016166">
    <property type="entry name" value="FAD-bd_PCMH"/>
</dbReference>
<dbReference type="InterPro" id="IPR036318">
    <property type="entry name" value="FAD-bd_PCMH-like_sf"/>
</dbReference>
<dbReference type="InterPro" id="IPR016169">
    <property type="entry name" value="FAD-bd_PCMH_sub2"/>
</dbReference>
<dbReference type="InterPro" id="IPR002346">
    <property type="entry name" value="Mopterin_DH_FAD-bd"/>
</dbReference>
<dbReference type="PANTHER" id="PTHR11908:SF143">
    <property type="entry name" value="INDOLE-3-ACETALDEHYDE OXIDASE"/>
    <property type="match status" value="1"/>
</dbReference>
<dbReference type="PANTHER" id="PTHR11908">
    <property type="entry name" value="XANTHINE DEHYDROGENASE"/>
    <property type="match status" value="1"/>
</dbReference>
<dbReference type="Pfam" id="PF01315">
    <property type="entry name" value="Ald_Xan_dh_C"/>
    <property type="match status" value="1"/>
</dbReference>
<dbReference type="Pfam" id="PF03450">
    <property type="entry name" value="CO_deh_flav_C"/>
    <property type="match status" value="1"/>
</dbReference>
<dbReference type="Pfam" id="PF00941">
    <property type="entry name" value="FAD_binding_5"/>
    <property type="match status" value="1"/>
</dbReference>
<dbReference type="Pfam" id="PF00111">
    <property type="entry name" value="Fer2"/>
    <property type="match status" value="1"/>
</dbReference>
<dbReference type="Pfam" id="PF01799">
    <property type="entry name" value="Fer2_2"/>
    <property type="match status" value="1"/>
</dbReference>
<dbReference type="Pfam" id="PF02738">
    <property type="entry name" value="MoCoBD_1"/>
    <property type="match status" value="1"/>
</dbReference>
<dbReference type="Pfam" id="PF20256">
    <property type="entry name" value="MoCoBD_2"/>
    <property type="match status" value="1"/>
</dbReference>
<dbReference type="PIRSF" id="PIRSF000127">
    <property type="entry name" value="Xanthine_DH"/>
    <property type="match status" value="1"/>
</dbReference>
<dbReference type="SMART" id="SM01008">
    <property type="entry name" value="Ald_Xan_dh_C"/>
    <property type="match status" value="1"/>
</dbReference>
<dbReference type="SMART" id="SM01092">
    <property type="entry name" value="CO_deh_flav_C"/>
    <property type="match status" value="1"/>
</dbReference>
<dbReference type="SUPFAM" id="SSF54292">
    <property type="entry name" value="2Fe-2S ferredoxin-like"/>
    <property type="match status" value="1"/>
</dbReference>
<dbReference type="SUPFAM" id="SSF55447">
    <property type="entry name" value="CO dehydrogenase flavoprotein C-terminal domain-like"/>
    <property type="match status" value="1"/>
</dbReference>
<dbReference type="SUPFAM" id="SSF47741">
    <property type="entry name" value="CO dehydrogenase ISP C-domain like"/>
    <property type="match status" value="1"/>
</dbReference>
<dbReference type="SUPFAM" id="SSF54665">
    <property type="entry name" value="CO dehydrogenase molybdoprotein N-domain-like"/>
    <property type="match status" value="1"/>
</dbReference>
<dbReference type="SUPFAM" id="SSF56176">
    <property type="entry name" value="FAD-binding/transporter-associated domain-like"/>
    <property type="match status" value="1"/>
</dbReference>
<dbReference type="SUPFAM" id="SSF56003">
    <property type="entry name" value="Molybdenum cofactor-binding domain"/>
    <property type="match status" value="1"/>
</dbReference>
<dbReference type="PROSITE" id="PS00197">
    <property type="entry name" value="2FE2S_FER_1"/>
    <property type="match status" value="1"/>
</dbReference>
<dbReference type="PROSITE" id="PS51085">
    <property type="entry name" value="2FE2S_FER_2"/>
    <property type="match status" value="1"/>
</dbReference>
<dbReference type="PROSITE" id="PS51387">
    <property type="entry name" value="FAD_PCMH"/>
    <property type="match status" value="1"/>
</dbReference>
<organism>
    <name type="scientific">Zea mays</name>
    <name type="common">Maize</name>
    <dbReference type="NCBI Taxonomy" id="4577"/>
    <lineage>
        <taxon>Eukaryota</taxon>
        <taxon>Viridiplantae</taxon>
        <taxon>Streptophyta</taxon>
        <taxon>Embryophyta</taxon>
        <taxon>Tracheophyta</taxon>
        <taxon>Spermatophyta</taxon>
        <taxon>Magnoliopsida</taxon>
        <taxon>Liliopsida</taxon>
        <taxon>Poales</taxon>
        <taxon>Poaceae</taxon>
        <taxon>PACMAD clade</taxon>
        <taxon>Panicoideae</taxon>
        <taxon>Andropogonodae</taxon>
        <taxon>Andropogoneae</taxon>
        <taxon>Tripsacinae</taxon>
        <taxon>Zea</taxon>
    </lineage>
</organism>